<comment type="subcellular location">
    <subcellularLocation>
        <location>Plastid</location>
        <location>Chloroplast</location>
    </subcellularLocation>
</comment>
<comment type="similarity">
    <text evidence="1">Belongs to the bacterial ribosomal protein bL32 family.</text>
</comment>
<organism>
    <name type="scientific">Olimarabidopsis pumila</name>
    <name type="common">Dwarf rocket</name>
    <name type="synonym">Arabidopsis griffithiana</name>
    <dbReference type="NCBI Taxonomy" id="74718"/>
    <lineage>
        <taxon>Eukaryota</taxon>
        <taxon>Viridiplantae</taxon>
        <taxon>Streptophyta</taxon>
        <taxon>Embryophyta</taxon>
        <taxon>Tracheophyta</taxon>
        <taxon>Spermatophyta</taxon>
        <taxon>Magnoliopsida</taxon>
        <taxon>eudicotyledons</taxon>
        <taxon>Gunneridae</taxon>
        <taxon>Pentapetalae</taxon>
        <taxon>rosids</taxon>
        <taxon>malvids</taxon>
        <taxon>Brassicales</taxon>
        <taxon>Brassicaceae</taxon>
        <taxon>Alyssopsideae</taxon>
        <taxon>Olimarabidopsis</taxon>
    </lineage>
</organism>
<reference key="1">
    <citation type="submission" date="2007-03" db="EMBL/GenBank/DDBJ databases">
        <title>Sequence analysis of Arabidopsis pumila JS2 chloroplast DNA.</title>
        <authorList>
            <person name="Hosouchi T."/>
            <person name="Tsuruoka H."/>
            <person name="Kotani H."/>
        </authorList>
    </citation>
    <scope>NUCLEOTIDE SEQUENCE [LARGE SCALE GENOMIC DNA]</scope>
</reference>
<gene>
    <name evidence="1" type="primary">rpl32</name>
</gene>
<dbReference type="EMBL" id="AP009368">
    <property type="protein sequence ID" value="BAF49988.1"/>
    <property type="molecule type" value="Genomic_DNA"/>
</dbReference>
<dbReference type="RefSeq" id="YP_001123163.1">
    <property type="nucleotide sequence ID" value="NC_009267.1"/>
</dbReference>
<dbReference type="SMR" id="A4QJY0"/>
<dbReference type="GeneID" id="4962411"/>
<dbReference type="GO" id="GO:0009507">
    <property type="term" value="C:chloroplast"/>
    <property type="evidence" value="ECO:0007669"/>
    <property type="project" value="UniProtKB-SubCell"/>
</dbReference>
<dbReference type="GO" id="GO:0015934">
    <property type="term" value="C:large ribosomal subunit"/>
    <property type="evidence" value="ECO:0007669"/>
    <property type="project" value="InterPro"/>
</dbReference>
<dbReference type="GO" id="GO:0003735">
    <property type="term" value="F:structural constituent of ribosome"/>
    <property type="evidence" value="ECO:0007669"/>
    <property type="project" value="InterPro"/>
</dbReference>
<dbReference type="GO" id="GO:0006412">
    <property type="term" value="P:translation"/>
    <property type="evidence" value="ECO:0007669"/>
    <property type="project" value="UniProtKB-UniRule"/>
</dbReference>
<dbReference type="HAMAP" id="MF_00340">
    <property type="entry name" value="Ribosomal_bL32"/>
    <property type="match status" value="1"/>
</dbReference>
<dbReference type="InterPro" id="IPR002677">
    <property type="entry name" value="Ribosomal_bL32"/>
</dbReference>
<dbReference type="InterPro" id="IPR044958">
    <property type="entry name" value="Ribosomal_bL32_plant/cyanobact"/>
</dbReference>
<dbReference type="InterPro" id="IPR011332">
    <property type="entry name" value="Ribosomal_zn-bd"/>
</dbReference>
<dbReference type="PANTHER" id="PTHR36083">
    <property type="entry name" value="50S RIBOSOMAL PROTEIN L32, CHLOROPLASTIC"/>
    <property type="match status" value="1"/>
</dbReference>
<dbReference type="PANTHER" id="PTHR36083:SF1">
    <property type="entry name" value="LARGE RIBOSOMAL SUBUNIT PROTEIN BL32C"/>
    <property type="match status" value="1"/>
</dbReference>
<dbReference type="Pfam" id="PF01783">
    <property type="entry name" value="Ribosomal_L32p"/>
    <property type="match status" value="1"/>
</dbReference>
<dbReference type="SUPFAM" id="SSF57829">
    <property type="entry name" value="Zn-binding ribosomal proteins"/>
    <property type="match status" value="1"/>
</dbReference>
<evidence type="ECO:0000255" key="1">
    <source>
        <dbReference type="HAMAP-Rule" id="MF_00340"/>
    </source>
</evidence>
<evidence type="ECO:0000305" key="2"/>
<sequence>MAVPKKRTSISKKRIRKKIWKRKGYWTSLKAFSLGKSLSTGNSKSFFVQQNK</sequence>
<proteinExistence type="inferred from homology"/>
<feature type="chain" id="PRO_0000296619" description="Large ribosomal subunit protein bL32c">
    <location>
        <begin position="1"/>
        <end position="52"/>
    </location>
</feature>
<protein>
    <recommendedName>
        <fullName evidence="1">Large ribosomal subunit protein bL32c</fullName>
    </recommendedName>
    <alternativeName>
        <fullName evidence="2">50S ribosomal protein L32, chloroplastic</fullName>
    </alternativeName>
</protein>
<name>RK32_OLIPU</name>
<keyword id="KW-0150">Chloroplast</keyword>
<keyword id="KW-0934">Plastid</keyword>
<keyword id="KW-0687">Ribonucleoprotein</keyword>
<keyword id="KW-0689">Ribosomal protein</keyword>
<geneLocation type="chloroplast"/>
<accession>A4QJY0</accession>